<organism>
    <name type="scientific">Methanococcus vannielii (strain ATCC 35089 / DSM 1224 / JCM 13029 / OCM 148 / SB)</name>
    <dbReference type="NCBI Taxonomy" id="406327"/>
    <lineage>
        <taxon>Archaea</taxon>
        <taxon>Methanobacteriati</taxon>
        <taxon>Methanobacteriota</taxon>
        <taxon>Methanomada group</taxon>
        <taxon>Methanococci</taxon>
        <taxon>Methanococcales</taxon>
        <taxon>Methanococcaceae</taxon>
        <taxon>Methanococcus</taxon>
    </lineage>
</organism>
<reference key="1">
    <citation type="submission" date="2007-06" db="EMBL/GenBank/DDBJ databases">
        <title>Complete sequence of Methanococcus vannielii SB.</title>
        <authorList>
            <consortium name="US DOE Joint Genome Institute"/>
            <person name="Copeland A."/>
            <person name="Lucas S."/>
            <person name="Lapidus A."/>
            <person name="Barry K."/>
            <person name="Glavina del Rio T."/>
            <person name="Dalin E."/>
            <person name="Tice H."/>
            <person name="Pitluck S."/>
            <person name="Chain P."/>
            <person name="Malfatti S."/>
            <person name="Shin M."/>
            <person name="Vergez L."/>
            <person name="Schmutz J."/>
            <person name="Larimer F."/>
            <person name="Land M."/>
            <person name="Hauser L."/>
            <person name="Kyrpides N."/>
            <person name="Anderson I."/>
            <person name="Sieprawska-Lupa M."/>
            <person name="Whitman W.B."/>
            <person name="Richardson P."/>
        </authorList>
    </citation>
    <scope>NUCLEOTIDE SEQUENCE [LARGE SCALE GENOMIC DNA]</scope>
    <source>
        <strain>ATCC 35089 / DSM 1224 / JCM 13029 / OCM 148 / SB</strain>
    </source>
</reference>
<dbReference type="EMBL" id="CP000742">
    <property type="protein sequence ID" value="ABR54146.1"/>
    <property type="molecule type" value="Genomic_DNA"/>
</dbReference>
<dbReference type="RefSeq" id="WP_011972049.1">
    <property type="nucleotide sequence ID" value="NC_009634.1"/>
</dbReference>
<dbReference type="SMR" id="A6UNS4"/>
<dbReference type="STRING" id="406327.Mevan_0237"/>
<dbReference type="GeneID" id="5324983"/>
<dbReference type="KEGG" id="mvn:Mevan_0237"/>
<dbReference type="eggNOG" id="arCOG04277">
    <property type="taxonomic scope" value="Archaea"/>
</dbReference>
<dbReference type="HOGENOM" id="CLU_102600_3_0_2"/>
<dbReference type="OrthoDB" id="23689at2157"/>
<dbReference type="Proteomes" id="UP000001107">
    <property type="component" value="Chromosome"/>
</dbReference>
<dbReference type="GO" id="GO:0005737">
    <property type="term" value="C:cytoplasm"/>
    <property type="evidence" value="ECO:0007669"/>
    <property type="project" value="UniProtKB-SubCell"/>
</dbReference>
<dbReference type="GO" id="GO:0043022">
    <property type="term" value="F:ribosome binding"/>
    <property type="evidence" value="ECO:0007669"/>
    <property type="project" value="InterPro"/>
</dbReference>
<dbReference type="GO" id="GO:0003723">
    <property type="term" value="F:RNA binding"/>
    <property type="evidence" value="ECO:0007669"/>
    <property type="project" value="InterPro"/>
</dbReference>
<dbReference type="GO" id="GO:0003746">
    <property type="term" value="F:translation elongation factor activity"/>
    <property type="evidence" value="ECO:0007669"/>
    <property type="project" value="InterPro"/>
</dbReference>
<dbReference type="GO" id="GO:0003743">
    <property type="term" value="F:translation initiation factor activity"/>
    <property type="evidence" value="ECO:0007669"/>
    <property type="project" value="UniProtKB-UniRule"/>
</dbReference>
<dbReference type="GO" id="GO:0045901">
    <property type="term" value="P:positive regulation of translational elongation"/>
    <property type="evidence" value="ECO:0007669"/>
    <property type="project" value="InterPro"/>
</dbReference>
<dbReference type="GO" id="GO:0045905">
    <property type="term" value="P:positive regulation of translational termination"/>
    <property type="evidence" value="ECO:0007669"/>
    <property type="project" value="InterPro"/>
</dbReference>
<dbReference type="CDD" id="cd04467">
    <property type="entry name" value="S1_aIF5A"/>
    <property type="match status" value="1"/>
</dbReference>
<dbReference type="Gene3D" id="2.30.30.30">
    <property type="match status" value="1"/>
</dbReference>
<dbReference type="Gene3D" id="2.40.50.140">
    <property type="entry name" value="Nucleic acid-binding proteins"/>
    <property type="match status" value="1"/>
</dbReference>
<dbReference type="HAMAP" id="MF_00085">
    <property type="entry name" value="eIF_5A"/>
    <property type="match status" value="1"/>
</dbReference>
<dbReference type="InterPro" id="IPR001884">
    <property type="entry name" value="IF5A-like"/>
</dbReference>
<dbReference type="InterPro" id="IPR048670">
    <property type="entry name" value="IF5A-like_N"/>
</dbReference>
<dbReference type="InterPro" id="IPR012340">
    <property type="entry name" value="NA-bd_OB-fold"/>
</dbReference>
<dbReference type="InterPro" id="IPR014722">
    <property type="entry name" value="Rib_uL2_dom2"/>
</dbReference>
<dbReference type="InterPro" id="IPR019769">
    <property type="entry name" value="Trans_elong_IF5A_hypusine_site"/>
</dbReference>
<dbReference type="InterPro" id="IPR022847">
    <property type="entry name" value="Transl_elong_IF5A_arc"/>
</dbReference>
<dbReference type="InterPro" id="IPR020189">
    <property type="entry name" value="Transl_elong_IF5A_C"/>
</dbReference>
<dbReference type="InterPro" id="IPR008991">
    <property type="entry name" value="Translation_prot_SH3-like_sf"/>
</dbReference>
<dbReference type="NCBIfam" id="TIGR00037">
    <property type="entry name" value="eIF_5A"/>
    <property type="match status" value="1"/>
</dbReference>
<dbReference type="NCBIfam" id="NF003076">
    <property type="entry name" value="PRK03999.1"/>
    <property type="match status" value="1"/>
</dbReference>
<dbReference type="PANTHER" id="PTHR11673">
    <property type="entry name" value="TRANSLATION INITIATION FACTOR 5A FAMILY MEMBER"/>
    <property type="match status" value="1"/>
</dbReference>
<dbReference type="Pfam" id="PF21485">
    <property type="entry name" value="IF5A-like_N"/>
    <property type="match status" value="1"/>
</dbReference>
<dbReference type="PIRSF" id="PIRSF003025">
    <property type="entry name" value="eIF5A"/>
    <property type="match status" value="1"/>
</dbReference>
<dbReference type="SMART" id="SM01376">
    <property type="entry name" value="eIF-5a"/>
    <property type="match status" value="1"/>
</dbReference>
<dbReference type="SUPFAM" id="SSF50249">
    <property type="entry name" value="Nucleic acid-binding proteins"/>
    <property type="match status" value="1"/>
</dbReference>
<dbReference type="SUPFAM" id="SSF50104">
    <property type="entry name" value="Translation proteins SH3-like domain"/>
    <property type="match status" value="1"/>
</dbReference>
<dbReference type="PROSITE" id="PS00302">
    <property type="entry name" value="IF5A_HYPUSINE"/>
    <property type="match status" value="1"/>
</dbReference>
<accession>A6UNS4</accession>
<evidence type="ECO:0000255" key="1">
    <source>
        <dbReference type="HAMAP-Rule" id="MF_00085"/>
    </source>
</evidence>
<protein>
    <recommendedName>
        <fullName evidence="1">Translation initiation factor 5A</fullName>
    </recommendedName>
    <alternativeName>
        <fullName evidence="1">Hypusine-containing protein</fullName>
    </alternativeName>
    <alternativeName>
        <fullName evidence="1">eIF-5A</fullName>
    </alternativeName>
</protein>
<keyword id="KW-0963">Cytoplasm</keyword>
<keyword id="KW-0385">Hypusine</keyword>
<keyword id="KW-0396">Initiation factor</keyword>
<keyword id="KW-0648">Protein biosynthesis</keyword>
<name>IF5A_METVS</name>
<proteinExistence type="inferred from homology"/>
<gene>
    <name type="primary">eIF5A</name>
    <name type="ordered locus">Mevan_0237</name>
</gene>
<sequence length="131" mass="14266">MAGTKPGDLGQVKVGQYVVIDGIACRVMDTAHSKPGKHGGAKVRMVAVGIFEPVKKEYVGPAGSRIDIPLIDKRKGQVLALMGDQVQIMDMESFETLEIPMPEDVEGIESGAEVEYFEAMDRYKITRVIGK</sequence>
<feature type="chain" id="PRO_1000007915" description="Translation initiation factor 5A">
    <location>
        <begin position="1"/>
        <end position="131"/>
    </location>
</feature>
<feature type="modified residue" description="Hypusine" evidence="1">
    <location>
        <position position="37"/>
    </location>
</feature>
<comment type="function">
    <text evidence="1">Functions by promoting the formation of the first peptide bond.</text>
</comment>
<comment type="subcellular location">
    <subcellularLocation>
        <location evidence="1">Cytoplasm</location>
    </subcellularLocation>
</comment>
<comment type="similarity">
    <text evidence="1">Belongs to the eIF-5A family.</text>
</comment>